<keyword id="KW-0002">3D-structure</keyword>
<keyword id="KW-0010">Activator</keyword>
<keyword id="KW-0025">Alternative splicing</keyword>
<keyword id="KW-0238">DNA-binding</keyword>
<keyword id="KW-0371">Homeobox</keyword>
<keyword id="KW-0440">LIM domain</keyword>
<keyword id="KW-0479">Metal-binding</keyword>
<keyword id="KW-0539">Nucleus</keyword>
<keyword id="KW-0597">Phosphoprotein</keyword>
<keyword id="KW-1185">Reference proteome</keyword>
<keyword id="KW-0677">Repeat</keyword>
<keyword id="KW-0804">Transcription</keyword>
<keyword id="KW-0805">Transcription regulation</keyword>
<keyword id="KW-0862">Zinc</keyword>
<comment type="function">
    <text evidence="1 5 6 7 9 11">Transcription factor (PubMed:10593900, PubMed:12150931, PubMed:18539116). Recognizes and binds to the consensus sequence motif 5'-AATTAATTA-3' in the regulatory elements of target genes, such as glycoprotein hormones alpha chain CGA and visual system homeobox CHX10, positively modulating transcription; transcription can be co-activated by LDB2 (PubMed:10593900, PubMed:18539116, PubMed:9192866). Synergistically enhances transcription from the prolactin promoter in cooperation with POU1F1/Pit-1 (PubMed:7708713). Required for the establishment of the specialized cells of the pituitary gland and the nervous system (By similarity). Involved in the development of interneurons and motor neurons in cooperation with LDB1 and ISL1 (PubMed:12150931, PubMed:18539116).</text>
</comment>
<comment type="subunit">
    <text evidence="1 5 6 7 8 11">Interacts with POU1F1 (By similarity). At neuronal promoters, interacts with LDB1, in motor neurons LDB1 is displaced by ISL1 and a ternary complex is formed in which ISL1 contacts both LHX3 and LDB1; allosteric structural changes in the DNA binding domain of LHX3, induced by the ISL1-LHX3 interaction, may explain differences in sequence specificity of the different complexes (PubMed:12150931, PubMed:18539116, PubMed:18583962). Interacts with LDB2 (PubMed:9192866). May interact with CITED2/MRG1 (PubMed:10593900).</text>
</comment>
<comment type="interaction">
    <interactant intactId="EBI-7988290">
        <id>P50481</id>
    </interactant>
    <interactant intactId="EBI-7988215">
        <id>P61372</id>
        <label>Isl1</label>
    </interactant>
    <organismsDiffer>false</organismsDiffer>
    <experiments>7</experiments>
</comment>
<comment type="interaction">
    <interactant intactId="EBI-7988290">
        <id>P50481</id>
    </interactant>
    <interactant intactId="EBI-6272082">
        <id>P70662</id>
        <label>Ldb1</label>
    </interactant>
    <organismsDiffer>false</organismsDiffer>
    <experiments>5</experiments>
</comment>
<comment type="subcellular location">
    <subcellularLocation>
        <location evidence="12">Nucleus</location>
    </subcellularLocation>
</comment>
<comment type="alternative products">
    <event type="alternative splicing"/>
    <isoform>
        <id>P50481-1</id>
        <name>LIM3A</name>
        <sequence type="displayed"/>
    </isoform>
    <isoform>
        <id>P50481-2</id>
        <name>LIM3B</name>
        <sequence type="described" ref="VSP_003108"/>
    </isoform>
    <text>Additional isoforms seem to exist.</text>
</comment>
<comment type="tissue specificity">
    <text evidence="9 10">Mostly expressed in the pituitary anterior and intermediate lobes (PubMed:7811383). It is also expressed in the pineal gland and transiently in the primordia of motor neurons including the spinal cord, pons and medulla oblongata (PubMed:7708713, PubMed:7811383).</text>
</comment>
<comment type="developmental stage">
    <text evidence="7 9 10">Expressed throughout pituitary development (PubMed:7708713, PubMed:7811383). Detected at 11 dpc in the primordium of the hypophysis (PubMed:7811383). Following a maximum between 12 dpc and 14 dpc, lower levels persisted into adulthood (PubMed:7708713, PubMed:7811383). Expressed at 11.5 dpc and 12.5 dpc in developing spinal cord, especially in motor neurons (at protein level) (PubMed:18539116).</text>
</comment>
<comment type="domain">
    <text>The LIM domain specifically interacts with the POU1F1/Pit-1 POU domain and is required for synergistic interactions with POU1F1, but not for basal transcriptional activation events.</text>
</comment>
<organism>
    <name type="scientific">Mus musculus</name>
    <name type="common">Mouse</name>
    <dbReference type="NCBI Taxonomy" id="10090"/>
    <lineage>
        <taxon>Eukaryota</taxon>
        <taxon>Metazoa</taxon>
        <taxon>Chordata</taxon>
        <taxon>Craniata</taxon>
        <taxon>Vertebrata</taxon>
        <taxon>Euteleostomi</taxon>
        <taxon>Mammalia</taxon>
        <taxon>Eutheria</taxon>
        <taxon>Euarchontoglires</taxon>
        <taxon>Glires</taxon>
        <taxon>Rodentia</taxon>
        <taxon>Myomorpha</taxon>
        <taxon>Muroidea</taxon>
        <taxon>Muridae</taxon>
        <taxon>Murinae</taxon>
        <taxon>Mus</taxon>
        <taxon>Mus</taxon>
    </lineage>
</organism>
<reference key="1">
    <citation type="journal article" date="1994" name="DNA Cell Biol.">
        <title>The mouse homeoprotein mLIM-3 is expressed early in cells derived from the neuroepithelium and persists in adult pituitary.</title>
        <authorList>
            <person name="Seidah N.G."/>
            <person name="Barale J.-C."/>
            <person name="Marcinkiewicz M."/>
            <person name="Mattei M.-G."/>
            <person name="Day R."/>
            <person name="Chretien M."/>
        </authorList>
    </citation>
    <scope>NUCLEOTIDE SEQUENCE [GENOMIC DNA] (LIM3A)</scope>
    <scope>TISSUE SPECIFICITY</scope>
    <scope>DEVELOPMENTAL STAGE</scope>
    <source>
        <tissue>Pituitary</tissue>
    </source>
</reference>
<reference key="2">
    <citation type="journal article" date="1995" name="Proc. Natl. Acad. Sci. U.S.A.">
        <title>P-Lim, a LIM homeodomain factor, is expressed during pituitary organ and cell commitment and synergizes with Pit-1.</title>
        <authorList>
            <person name="Bach I."/>
            <person name="Rhodes S.J."/>
            <person name="Pearse R.V. II"/>
            <person name="Heinzel T."/>
            <person name="Gloss B."/>
            <person name="Scully K.M."/>
            <person name="Sawchenko P.E."/>
            <person name="Rosenfeld M.G."/>
        </authorList>
    </citation>
    <scope>NUCLEOTIDE SEQUENCE [MRNA] (LIM3A)</scope>
    <scope>FUNCTION</scope>
    <scope>TISSUE SPECIFICITY</scope>
    <scope>DEVELOPMENTAL STAGE</scope>
    <source>
        <tissue>Pituitary</tissue>
    </source>
</reference>
<reference key="3">
    <citation type="journal article" date="1995" name="Dev. Dyn.">
        <title>Expression pattern of the murine LIM class homeobox gene Lhx3 in subsets of neural and neuroendocrine tissues.</title>
        <authorList>
            <person name="Zhadanov A.B."/>
            <person name="Bertuzzi S."/>
            <person name="Taira M."/>
            <person name="Dawid I.B."/>
            <person name="Westphal H."/>
        </authorList>
    </citation>
    <scope>NUCLEOTIDE SEQUENCE [MRNA] (LIM3A AND LIM3B)</scope>
    <source>
        <strain>DBA/N</strain>
        <strain>NIH Swiss</strain>
        <tissue>Pituitary</tissue>
    </source>
</reference>
<reference key="4">
    <citation type="journal article" date="2004" name="Genome Res.">
        <title>The status, quality, and expansion of the NIH full-length cDNA project: the Mammalian Gene Collection (MGC).</title>
        <authorList>
            <consortium name="The MGC Project Team"/>
        </authorList>
    </citation>
    <scope>NUCLEOTIDE SEQUENCE [LARGE SCALE MRNA]</scope>
    <source>
        <tissue evidence="13">Brain</tissue>
    </source>
</reference>
<reference key="5">
    <citation type="journal article" date="1997" name="Genes Dev.">
        <title>A family of LIM domain-associated cofactors confer transcriptional synergism between LIM and Otx homeodomain proteins.</title>
        <authorList>
            <person name="Bach I."/>
            <person name="Carriere C."/>
            <person name="Ostendorff H.P."/>
            <person name="Andersen B."/>
            <person name="Rosenfeld M.G."/>
        </authorList>
    </citation>
    <scope>FUNCTION</scope>
    <scope>INTERACTION WITH LDB2</scope>
</reference>
<reference key="6">
    <citation type="journal article" date="1999" name="J. Biol. Chem.">
        <title>MRG1 binds to the LIM domain of Lhx2 and may function as a coactivator to stimulate glycoprotein hormone alpha-subunit gene expression.</title>
        <authorList>
            <person name="Glenn D.J."/>
            <person name="Maurer R.A."/>
        </authorList>
    </citation>
    <scope>FUNCTION</scope>
    <scope>INTERACTION WITH CITED2</scope>
</reference>
<reference key="7">
    <citation type="journal article" date="2002" name="Cell">
        <title>LIM factor Lhx3 contributes to the specification of motor neuron and interneuron identity through cell-type-specific protein-protein interactions.</title>
        <authorList>
            <person name="Thaler J.P."/>
            <person name="Lee S.K."/>
            <person name="Jurata L.W."/>
            <person name="Gill G.N."/>
            <person name="Pfaff S.L."/>
        </authorList>
    </citation>
    <scope>FUNCTION</scope>
    <scope>INTERACTION WITH LDB1 AND ISL1</scope>
</reference>
<reference key="8">
    <citation type="journal article" date="2008" name="Dev. Cell">
        <title>A regulatory network to segregate the identity of neuronal subtypes.</title>
        <authorList>
            <person name="Lee S."/>
            <person name="Lee B."/>
            <person name="Joshi K."/>
            <person name="Pfaff S.L."/>
            <person name="Lee J.W."/>
            <person name="Lee S.K."/>
        </authorList>
    </citation>
    <scope>FUNCTION</scope>
    <scope>INTERACTION WITH LDB1 AND ISL1</scope>
    <scope>DEVELOPMENTAL STAGE</scope>
</reference>
<reference key="9">
    <citation type="journal article" date="2008" name="EMBO J.">
        <title>Implementing the LIM code: the structural basis for cell type-specific assembly of LIM-homeodomain complexes.</title>
        <authorList>
            <person name="Bhati M."/>
            <person name="Lee C."/>
            <person name="Nancarrow A.L."/>
            <person name="Lee M."/>
            <person name="Craig V.J."/>
            <person name="Bach I."/>
            <person name="Guss J.M."/>
            <person name="Mackay J.P."/>
            <person name="Matthews J.M."/>
        </authorList>
    </citation>
    <scope>X-RAY CRYSTALLOGRAPHY (2.05 ANGSTROMS) OF 28-153 IN COMPLEX WITH ISL1</scope>
</reference>
<dbReference type="EMBL" id="L33776">
    <property type="protein sequence ID" value="AAA62369.1"/>
    <property type="molecule type" value="Genomic_DNA"/>
</dbReference>
<dbReference type="EMBL" id="L38857">
    <property type="protein sequence ID" value="AAA73902.1"/>
    <property type="molecule type" value="mRNA"/>
</dbReference>
<dbReference type="EMBL" id="L38249">
    <property type="protein sequence ID" value="AAA98998.1"/>
    <property type="molecule type" value="mRNA"/>
</dbReference>
<dbReference type="EMBL" id="L38248">
    <property type="protein sequence ID" value="AAB64178.1"/>
    <property type="molecule type" value="mRNA"/>
</dbReference>
<dbReference type="EMBL" id="BC150689">
    <property type="protein sequence ID" value="AAI50690.1"/>
    <property type="molecule type" value="mRNA"/>
</dbReference>
<dbReference type="CCDS" id="CCDS38081.1">
    <molecule id="P50481-2"/>
</dbReference>
<dbReference type="CCDS" id="CCDS71004.1">
    <molecule id="P50481-1"/>
</dbReference>
<dbReference type="PIR" id="I59360">
    <property type="entry name" value="I59360"/>
</dbReference>
<dbReference type="RefSeq" id="NP_001034742.1">
    <molecule id="P50481-2"/>
    <property type="nucleotide sequence ID" value="NM_001039653.2"/>
</dbReference>
<dbReference type="RefSeq" id="NP_034841.2">
    <molecule id="P50481-1"/>
    <property type="nucleotide sequence ID" value="NM_010711.2"/>
</dbReference>
<dbReference type="PDB" id="2JTN">
    <property type="method" value="NMR"/>
    <property type="chains" value="A=28-153"/>
</dbReference>
<dbReference type="PDB" id="2RGT">
    <property type="method" value="X-ray"/>
    <property type="resolution" value="2.05 A"/>
    <property type="chains" value="A/B=28-153"/>
</dbReference>
<dbReference type="PDBsum" id="2JTN"/>
<dbReference type="PDBsum" id="2RGT"/>
<dbReference type="SASBDB" id="P50481"/>
<dbReference type="SMR" id="P50481"/>
<dbReference type="BioGRID" id="201156">
    <property type="interactions" value="8"/>
</dbReference>
<dbReference type="CORUM" id="P50481"/>
<dbReference type="FunCoup" id="P50481">
    <property type="interactions" value="497"/>
</dbReference>
<dbReference type="IntAct" id="P50481">
    <property type="interactions" value="2"/>
</dbReference>
<dbReference type="MINT" id="P50481"/>
<dbReference type="STRING" id="10090.ENSMUSP00000028302"/>
<dbReference type="PhosphoSitePlus" id="P50481"/>
<dbReference type="PaxDb" id="10090-ENSMUSP00000028302"/>
<dbReference type="Antibodypedia" id="18678">
    <property type="antibodies" value="147 antibodies from 27 providers"/>
</dbReference>
<dbReference type="DNASU" id="16871"/>
<dbReference type="Ensembl" id="ENSMUST00000028302.8">
    <molecule id="P50481-2"/>
    <property type="protein sequence ID" value="ENSMUSP00000028302.7"/>
    <property type="gene ID" value="ENSMUSG00000026934.16"/>
</dbReference>
<dbReference type="Ensembl" id="ENSMUST00000054099.16">
    <molecule id="P50481-1"/>
    <property type="protein sequence ID" value="ENSMUSP00000056822.10"/>
    <property type="gene ID" value="ENSMUSG00000026934.16"/>
</dbReference>
<dbReference type="GeneID" id="16871"/>
<dbReference type="KEGG" id="mmu:16871"/>
<dbReference type="UCSC" id="uc008iug.1">
    <molecule id="P50481-1"/>
    <property type="organism name" value="mouse"/>
</dbReference>
<dbReference type="AGR" id="MGI:102673"/>
<dbReference type="CTD" id="8022"/>
<dbReference type="MGI" id="MGI:102673">
    <property type="gene designation" value="Lhx3"/>
</dbReference>
<dbReference type="VEuPathDB" id="HostDB:ENSMUSG00000026934"/>
<dbReference type="eggNOG" id="KOG4577">
    <property type="taxonomic scope" value="Eukaryota"/>
</dbReference>
<dbReference type="GeneTree" id="ENSGT00940000160316"/>
<dbReference type="HOGENOM" id="CLU_027802_5_0_1"/>
<dbReference type="InParanoid" id="P50481"/>
<dbReference type="OMA" id="QAMSGHP"/>
<dbReference type="OrthoDB" id="10068367at2759"/>
<dbReference type="TreeFam" id="TF315442"/>
<dbReference type="BioGRID-ORCS" id="16871">
    <property type="hits" value="1 hit in 80 CRISPR screens"/>
</dbReference>
<dbReference type="EvolutionaryTrace" id="P50481"/>
<dbReference type="PRO" id="PR:P50481"/>
<dbReference type="Proteomes" id="UP000000589">
    <property type="component" value="Chromosome 2"/>
</dbReference>
<dbReference type="RNAct" id="P50481">
    <property type="molecule type" value="protein"/>
</dbReference>
<dbReference type="Bgee" id="ENSMUSG00000026934">
    <property type="expression patterns" value="Expressed in Rathke's pouch and 65 other cell types or tissues"/>
</dbReference>
<dbReference type="ExpressionAtlas" id="P50481">
    <property type="expression patterns" value="baseline and differential"/>
</dbReference>
<dbReference type="GO" id="GO:0000785">
    <property type="term" value="C:chromatin"/>
    <property type="evidence" value="ECO:0000314"/>
    <property type="project" value="UniProtKB"/>
</dbReference>
<dbReference type="GO" id="GO:0005654">
    <property type="term" value="C:nucleoplasm"/>
    <property type="evidence" value="ECO:0000304"/>
    <property type="project" value="Reactome"/>
</dbReference>
<dbReference type="GO" id="GO:0005634">
    <property type="term" value="C:nucleus"/>
    <property type="evidence" value="ECO:0000266"/>
    <property type="project" value="MGI"/>
</dbReference>
<dbReference type="GO" id="GO:0005667">
    <property type="term" value="C:transcription regulator complex"/>
    <property type="evidence" value="ECO:0000314"/>
    <property type="project" value="UniProtKB"/>
</dbReference>
<dbReference type="GO" id="GO:0001228">
    <property type="term" value="F:DNA-binding transcription activator activity, RNA polymerase II-specific"/>
    <property type="evidence" value="ECO:0007669"/>
    <property type="project" value="Ensembl"/>
</dbReference>
<dbReference type="GO" id="GO:0061629">
    <property type="term" value="F:RNA polymerase II-specific DNA-binding transcription factor binding"/>
    <property type="evidence" value="ECO:0007669"/>
    <property type="project" value="Ensembl"/>
</dbReference>
<dbReference type="GO" id="GO:0000976">
    <property type="term" value="F:transcription cis-regulatory region binding"/>
    <property type="evidence" value="ECO:0000314"/>
    <property type="project" value="UniProtKB"/>
</dbReference>
<dbReference type="GO" id="GO:0001223">
    <property type="term" value="F:transcription coactivator binding"/>
    <property type="evidence" value="ECO:0000353"/>
    <property type="project" value="UniProtKB"/>
</dbReference>
<dbReference type="GO" id="GO:0001221">
    <property type="term" value="F:transcription coregulator binding"/>
    <property type="evidence" value="ECO:0000353"/>
    <property type="project" value="UniProtKB"/>
</dbReference>
<dbReference type="GO" id="GO:0008270">
    <property type="term" value="F:zinc ion binding"/>
    <property type="evidence" value="ECO:0007669"/>
    <property type="project" value="InterPro"/>
</dbReference>
<dbReference type="GO" id="GO:0006915">
    <property type="term" value="P:apoptotic process"/>
    <property type="evidence" value="ECO:0000315"/>
    <property type="project" value="MGI"/>
</dbReference>
<dbReference type="GO" id="GO:0009953">
    <property type="term" value="P:dorsal/ventral pattern formation"/>
    <property type="evidence" value="ECO:0000315"/>
    <property type="project" value="MGI"/>
</dbReference>
<dbReference type="GO" id="GO:0048839">
    <property type="term" value="P:inner ear development"/>
    <property type="evidence" value="ECO:0007669"/>
    <property type="project" value="Ensembl"/>
</dbReference>
<dbReference type="GO" id="GO:0030324">
    <property type="term" value="P:lung development"/>
    <property type="evidence" value="ECO:0007669"/>
    <property type="project" value="Ensembl"/>
</dbReference>
<dbReference type="GO" id="GO:0021526">
    <property type="term" value="P:medial motor column neuron differentiation"/>
    <property type="evidence" value="ECO:0000316"/>
    <property type="project" value="MGI"/>
</dbReference>
<dbReference type="GO" id="GO:0008045">
    <property type="term" value="P:motor neuron axon guidance"/>
    <property type="evidence" value="ECO:0000316"/>
    <property type="project" value="MGI"/>
</dbReference>
<dbReference type="GO" id="GO:0043066">
    <property type="term" value="P:negative regulation of apoptotic process"/>
    <property type="evidence" value="ECO:0000315"/>
    <property type="project" value="MGI"/>
</dbReference>
<dbReference type="GO" id="GO:0021983">
    <property type="term" value="P:pituitary gland development"/>
    <property type="evidence" value="ECO:0000315"/>
    <property type="project" value="MGI"/>
</dbReference>
<dbReference type="GO" id="GO:0001890">
    <property type="term" value="P:placenta development"/>
    <property type="evidence" value="ECO:0000316"/>
    <property type="project" value="MGI"/>
</dbReference>
<dbReference type="GO" id="GO:0045893">
    <property type="term" value="P:positive regulation of DNA-templated transcription"/>
    <property type="evidence" value="ECO:0000314"/>
    <property type="project" value="UniProtKB"/>
</dbReference>
<dbReference type="GO" id="GO:0045944">
    <property type="term" value="P:positive regulation of transcription by RNA polymerase II"/>
    <property type="evidence" value="ECO:0000314"/>
    <property type="project" value="MGI"/>
</dbReference>
<dbReference type="GO" id="GO:0060127">
    <property type="term" value="P:prolactin secreting cell differentiation"/>
    <property type="evidence" value="ECO:0000315"/>
    <property type="project" value="MGI"/>
</dbReference>
<dbReference type="GO" id="GO:0060126">
    <property type="term" value="P:somatotropin secreting cell differentiation"/>
    <property type="evidence" value="ECO:0000315"/>
    <property type="project" value="MGI"/>
</dbReference>
<dbReference type="GO" id="GO:0021527">
    <property type="term" value="P:spinal cord association neuron differentiation"/>
    <property type="evidence" value="ECO:0000314"/>
    <property type="project" value="MGI"/>
</dbReference>
<dbReference type="GO" id="GO:0021520">
    <property type="term" value="P:spinal cord motor neuron cell fate specification"/>
    <property type="evidence" value="ECO:0000316"/>
    <property type="project" value="MGI"/>
</dbReference>
<dbReference type="GO" id="GO:0060129">
    <property type="term" value="P:thyroid-stimulating hormone-secreting cell differentiation"/>
    <property type="evidence" value="ECO:0000315"/>
    <property type="project" value="MGI"/>
</dbReference>
<dbReference type="GO" id="GO:0021521">
    <property type="term" value="P:ventral spinal cord interneuron specification"/>
    <property type="evidence" value="ECO:0000314"/>
    <property type="project" value="MGI"/>
</dbReference>
<dbReference type="CDD" id="cd00086">
    <property type="entry name" value="homeodomain"/>
    <property type="match status" value="1"/>
</dbReference>
<dbReference type="CDD" id="cd09467">
    <property type="entry name" value="LIM1_Lhx3b"/>
    <property type="match status" value="1"/>
</dbReference>
<dbReference type="CDD" id="cd09376">
    <property type="entry name" value="LIM2_Lhx3_Lhx4"/>
    <property type="match status" value="1"/>
</dbReference>
<dbReference type="FunFam" id="2.10.110.10:FF:000120">
    <property type="entry name" value="Insulin gene enhancer protein ISL-2"/>
    <property type="match status" value="1"/>
</dbReference>
<dbReference type="FunFam" id="1.10.10.60:FF:000219">
    <property type="entry name" value="LIM/homeobox protein Lhx3"/>
    <property type="match status" value="1"/>
</dbReference>
<dbReference type="FunFam" id="2.10.110.10:FF:000032">
    <property type="entry name" value="LIM/homeobox protein Lhx3"/>
    <property type="match status" value="1"/>
</dbReference>
<dbReference type="Gene3D" id="2.10.110.10">
    <property type="entry name" value="Cysteine Rich Protein"/>
    <property type="match status" value="2"/>
</dbReference>
<dbReference type="Gene3D" id="1.10.10.60">
    <property type="entry name" value="Homeodomain-like"/>
    <property type="match status" value="1"/>
</dbReference>
<dbReference type="IDEAL" id="IID50046"/>
<dbReference type="InterPro" id="IPR001356">
    <property type="entry name" value="HD"/>
</dbReference>
<dbReference type="InterPro" id="IPR017970">
    <property type="entry name" value="Homeobox_CS"/>
</dbReference>
<dbReference type="InterPro" id="IPR009057">
    <property type="entry name" value="Homeodomain-like_sf"/>
</dbReference>
<dbReference type="InterPro" id="IPR049594">
    <property type="entry name" value="Lhx3/4-like_LIM2"/>
</dbReference>
<dbReference type="InterPro" id="IPR049593">
    <property type="entry name" value="Lhx3_LIM1"/>
</dbReference>
<dbReference type="InterPro" id="IPR050453">
    <property type="entry name" value="LIM_Homeobox_TF"/>
</dbReference>
<dbReference type="InterPro" id="IPR001781">
    <property type="entry name" value="Znf_LIM"/>
</dbReference>
<dbReference type="PANTHER" id="PTHR24208">
    <property type="entry name" value="LIM/HOMEOBOX PROTEIN LHX"/>
    <property type="match status" value="1"/>
</dbReference>
<dbReference type="PANTHER" id="PTHR24208:SF91">
    <property type="entry name" value="LIM_HOMEOBOX PROTEIN LHX3"/>
    <property type="match status" value="1"/>
</dbReference>
<dbReference type="Pfam" id="PF00046">
    <property type="entry name" value="Homeodomain"/>
    <property type="match status" value="1"/>
</dbReference>
<dbReference type="Pfam" id="PF00412">
    <property type="entry name" value="LIM"/>
    <property type="match status" value="2"/>
</dbReference>
<dbReference type="SMART" id="SM00389">
    <property type="entry name" value="HOX"/>
    <property type="match status" value="1"/>
</dbReference>
<dbReference type="SMART" id="SM00132">
    <property type="entry name" value="LIM"/>
    <property type="match status" value="2"/>
</dbReference>
<dbReference type="SUPFAM" id="SSF57716">
    <property type="entry name" value="Glucocorticoid receptor-like (DNA-binding domain)"/>
    <property type="match status" value="2"/>
</dbReference>
<dbReference type="SUPFAM" id="SSF46689">
    <property type="entry name" value="Homeodomain-like"/>
    <property type="match status" value="1"/>
</dbReference>
<dbReference type="PROSITE" id="PS00027">
    <property type="entry name" value="HOMEOBOX_1"/>
    <property type="match status" value="1"/>
</dbReference>
<dbReference type="PROSITE" id="PS50071">
    <property type="entry name" value="HOMEOBOX_2"/>
    <property type="match status" value="1"/>
</dbReference>
<dbReference type="PROSITE" id="PS00478">
    <property type="entry name" value="LIM_DOMAIN_1"/>
    <property type="match status" value="2"/>
</dbReference>
<dbReference type="PROSITE" id="PS50023">
    <property type="entry name" value="LIM_DOMAIN_2"/>
    <property type="match status" value="2"/>
</dbReference>
<evidence type="ECO:0000250" key="1">
    <source>
        <dbReference type="UniProtKB" id="Q9UBR4"/>
    </source>
</evidence>
<evidence type="ECO:0000255" key="2">
    <source>
        <dbReference type="PROSITE-ProRule" id="PRU00108"/>
    </source>
</evidence>
<evidence type="ECO:0000255" key="3">
    <source>
        <dbReference type="PROSITE-ProRule" id="PRU00125"/>
    </source>
</evidence>
<evidence type="ECO:0000256" key="4">
    <source>
        <dbReference type="SAM" id="MobiDB-lite"/>
    </source>
</evidence>
<evidence type="ECO:0000269" key="5">
    <source>
    </source>
</evidence>
<evidence type="ECO:0000269" key="6">
    <source>
    </source>
</evidence>
<evidence type="ECO:0000269" key="7">
    <source>
    </source>
</evidence>
<evidence type="ECO:0000269" key="8">
    <source>
    </source>
</evidence>
<evidence type="ECO:0000269" key="9">
    <source>
    </source>
</evidence>
<evidence type="ECO:0000269" key="10">
    <source>
    </source>
</evidence>
<evidence type="ECO:0000269" key="11">
    <source>
    </source>
</evidence>
<evidence type="ECO:0000305" key="12"/>
<evidence type="ECO:0000312" key="13">
    <source>
        <dbReference type="EMBL" id="AAI50690.1"/>
    </source>
</evidence>
<evidence type="ECO:0007829" key="14">
    <source>
        <dbReference type="PDB" id="2JTN"/>
    </source>
</evidence>
<evidence type="ECO:0007829" key="15">
    <source>
        <dbReference type="PDB" id="2RGT"/>
    </source>
</evidence>
<accession>P50481</accession>
<accession>A2ALD9</accession>
<accession>Q61800</accession>
<accession>Q61801</accession>
<sequence>MLLEAELDCHRERPGAPGASALCTFSRTPEIPMCAGCDQHILDRFILKALDRHWHSKCLKCSDCHVPLAERCFSRGESVYCKDDFFKRFGTKCAACQLGIPPTQVVRRAQDFVYHLHCFACVVCKRQLATGDEFYLMEDSRLVCKADYETAKQREAEATAKRPRTTITAKQLETLKSAYNTSPKPARHVREQLSSETGLDMRVVQVWFQNRRAKEKRLKKDAGRQRWGQYFRNMKRSRGSSKSDKDSIQEGQDSDAEVSFTDEPSMADMGPANGLYSSLGEPAPALGRPVGGLGSFTLDHGGLTGPEQYRELRPGSPYGIPPSPAAPQSLPGPQPLLSSLVYPDTNLSLVPSGPPGGPPPMRVLAGNGPSSDLSTESSSGYPDFPASPASWLDEVDHAQF</sequence>
<protein>
    <recommendedName>
        <fullName>LIM/homeobox protein Lhx3</fullName>
        <shortName>LIM homeobox protein 3</shortName>
    </recommendedName>
    <alternativeName>
        <fullName>Homeobox protein LIM-3</fullName>
    </alternativeName>
    <alternativeName>
        <fullName>Homeobox protein P-LIM</fullName>
    </alternativeName>
</protein>
<proteinExistence type="evidence at protein level"/>
<feature type="chain" id="PRO_0000075782" description="LIM/homeobox protein Lhx3">
    <location>
        <begin position="1"/>
        <end position="400"/>
    </location>
</feature>
<feature type="domain" description="LIM zinc-binding 1" evidence="3">
    <location>
        <begin position="34"/>
        <end position="84"/>
    </location>
</feature>
<feature type="domain" description="LIM zinc-binding 2" evidence="3">
    <location>
        <begin position="93"/>
        <end position="147"/>
    </location>
</feature>
<feature type="DNA-binding region" description="Homeobox" evidence="2">
    <location>
        <begin position="160"/>
        <end position="219"/>
    </location>
</feature>
<feature type="region of interest" description="Disordered" evidence="4">
    <location>
        <begin position="215"/>
        <end position="280"/>
    </location>
</feature>
<feature type="region of interest" description="Disordered" evidence="4">
    <location>
        <begin position="297"/>
        <end position="400"/>
    </location>
</feature>
<feature type="compositionally biased region" description="Pro residues" evidence="4">
    <location>
        <begin position="319"/>
        <end position="334"/>
    </location>
</feature>
<feature type="compositionally biased region" description="Pro residues" evidence="4">
    <location>
        <begin position="352"/>
        <end position="361"/>
    </location>
</feature>
<feature type="compositionally biased region" description="Polar residues" evidence="4">
    <location>
        <begin position="368"/>
        <end position="380"/>
    </location>
</feature>
<feature type="modified residue" description="Phosphoserine" evidence="1">
    <location>
        <position position="74"/>
    </location>
</feature>
<feature type="modified residue" description="Phosphotyrosine" evidence="1">
    <location>
        <position position="230"/>
    </location>
</feature>
<feature type="modified residue" description="Phosphoserine" evidence="1">
    <location>
        <position position="237"/>
    </location>
</feature>
<feature type="modified residue" description="Phosphoserine" evidence="1">
    <location>
        <position position="241"/>
    </location>
</feature>
<feature type="splice variant" id="VSP_003108" description="In isoform LIM3B." evidence="12">
    <original>MLLEAELDCHRERPGAPGASALCTFSRTP</original>
    <variation>MEARGELDPSRESAGGDLLLALLARRADLRR</variation>
    <location>
        <begin position="1"/>
        <end position="29"/>
    </location>
</feature>
<feature type="sequence conflict" description="In Ref. 3; AAA98998." evidence="12" ref="3">
    <original>S</original>
    <variation>N</variation>
    <location>
        <position position="26"/>
    </location>
</feature>
<feature type="sequence conflict" description="In Ref. 2; AAA73902." evidence="12" ref="2">
    <original>G</original>
    <variation>R</variation>
    <location>
        <position position="76"/>
    </location>
</feature>
<feature type="sequence conflict" description="In Ref. 2; AAA73902." evidence="12" ref="2">
    <original>EL</original>
    <variation>DV</variation>
    <location>
        <begin position="311"/>
        <end position="312"/>
    </location>
</feature>
<feature type="sequence conflict" description="In Ref. 2." evidence="12" ref="2">
    <original>PSGPPGGPPPMRVLAGNGPSSDLSTESS</original>
    <variation>LQGPQVDPGPTHEGCWLEMARTCPQRAG</variation>
    <location>
        <begin position="351"/>
        <end position="378"/>
    </location>
</feature>
<feature type="strand" evidence="15">
    <location>
        <begin position="33"/>
        <end position="40"/>
    </location>
</feature>
<feature type="strand" evidence="15">
    <location>
        <begin position="43"/>
        <end position="45"/>
    </location>
</feature>
<feature type="strand" evidence="14">
    <location>
        <begin position="52"/>
        <end position="54"/>
    </location>
</feature>
<feature type="turn" evidence="15">
    <location>
        <begin position="56"/>
        <end position="58"/>
    </location>
</feature>
<feature type="turn" evidence="15">
    <location>
        <begin position="62"/>
        <end position="64"/>
    </location>
</feature>
<feature type="strand" evidence="15">
    <location>
        <begin position="73"/>
        <end position="77"/>
    </location>
</feature>
<feature type="strand" evidence="14">
    <location>
        <begin position="78"/>
        <end position="80"/>
    </location>
</feature>
<feature type="helix" evidence="15">
    <location>
        <begin position="82"/>
        <end position="89"/>
    </location>
</feature>
<feature type="turn" evidence="15">
    <location>
        <begin position="94"/>
        <end position="96"/>
    </location>
</feature>
<feature type="strand" evidence="15">
    <location>
        <begin position="104"/>
        <end position="109"/>
    </location>
</feature>
<feature type="strand" evidence="15">
    <location>
        <begin position="112"/>
        <end position="115"/>
    </location>
</feature>
<feature type="helix" evidence="15">
    <location>
        <begin position="116"/>
        <end position="118"/>
    </location>
</feature>
<feature type="turn" evidence="15">
    <location>
        <begin position="122"/>
        <end position="124"/>
    </location>
</feature>
<feature type="strand" evidence="15">
    <location>
        <begin position="133"/>
        <end position="136"/>
    </location>
</feature>
<feature type="strand" evidence="15">
    <location>
        <begin position="142"/>
        <end position="144"/>
    </location>
</feature>
<feature type="helix" evidence="15">
    <location>
        <begin position="145"/>
        <end position="147"/>
    </location>
</feature>
<feature type="helix" evidence="15">
    <location>
        <begin position="148"/>
        <end position="153"/>
    </location>
</feature>
<name>LHX3_MOUSE</name>
<gene>
    <name type="primary">Lhx3</name>
    <name type="synonym">Lim-3</name>
    <name type="synonym">Lim3</name>
    <name type="synonym">Plim</name>
</gene>